<accession>Q17W08</accession>
<reference key="1">
    <citation type="journal article" date="2006" name="PLoS Genet.">
        <title>Who ate whom? Adaptive Helicobacter genomic changes that accompanied a host jump from early humans to large felines.</title>
        <authorList>
            <person name="Eppinger M."/>
            <person name="Baar C."/>
            <person name="Linz B."/>
            <person name="Raddatz G."/>
            <person name="Lanz C."/>
            <person name="Keller H."/>
            <person name="Morelli G."/>
            <person name="Gressmann H."/>
            <person name="Achtman M."/>
            <person name="Schuster S.C."/>
        </authorList>
    </citation>
    <scope>NUCLEOTIDE SEQUENCE [LARGE SCALE GENOMIC DNA]</scope>
    <source>
        <strain>Sheeba</strain>
    </source>
</reference>
<keyword id="KW-0963">Cytoplasm</keyword>
<keyword id="KW-0328">Glycosyltransferase</keyword>
<keyword id="KW-0660">Purine salvage</keyword>
<keyword id="KW-0808">Transferase</keyword>
<dbReference type="EC" id="2.4.2.7" evidence="1"/>
<dbReference type="EMBL" id="AM260522">
    <property type="protein sequence ID" value="CAK00168.1"/>
    <property type="molecule type" value="Genomic_DNA"/>
</dbReference>
<dbReference type="RefSeq" id="WP_011578258.1">
    <property type="nucleotide sequence ID" value="NC_008229.1"/>
</dbReference>
<dbReference type="SMR" id="Q17W08"/>
<dbReference type="STRING" id="382638.Hac_1440"/>
<dbReference type="GeneID" id="31758730"/>
<dbReference type="KEGG" id="hac:Hac_1440"/>
<dbReference type="eggNOG" id="COG0503">
    <property type="taxonomic scope" value="Bacteria"/>
</dbReference>
<dbReference type="HOGENOM" id="CLU_063339_3_0_7"/>
<dbReference type="OrthoDB" id="9803963at2"/>
<dbReference type="BioCyc" id="HACI382638:HAC_RS06135-MONOMER"/>
<dbReference type="UniPathway" id="UPA00588">
    <property type="reaction ID" value="UER00646"/>
</dbReference>
<dbReference type="Proteomes" id="UP000000775">
    <property type="component" value="Chromosome"/>
</dbReference>
<dbReference type="GO" id="GO:0005737">
    <property type="term" value="C:cytoplasm"/>
    <property type="evidence" value="ECO:0007669"/>
    <property type="project" value="UniProtKB-SubCell"/>
</dbReference>
<dbReference type="GO" id="GO:0002055">
    <property type="term" value="F:adenine binding"/>
    <property type="evidence" value="ECO:0007669"/>
    <property type="project" value="TreeGrafter"/>
</dbReference>
<dbReference type="GO" id="GO:0003999">
    <property type="term" value="F:adenine phosphoribosyltransferase activity"/>
    <property type="evidence" value="ECO:0007669"/>
    <property type="project" value="UniProtKB-UniRule"/>
</dbReference>
<dbReference type="GO" id="GO:0016208">
    <property type="term" value="F:AMP binding"/>
    <property type="evidence" value="ECO:0007669"/>
    <property type="project" value="TreeGrafter"/>
</dbReference>
<dbReference type="GO" id="GO:0006168">
    <property type="term" value="P:adenine salvage"/>
    <property type="evidence" value="ECO:0007669"/>
    <property type="project" value="InterPro"/>
</dbReference>
<dbReference type="GO" id="GO:0044209">
    <property type="term" value="P:AMP salvage"/>
    <property type="evidence" value="ECO:0007669"/>
    <property type="project" value="UniProtKB-UniRule"/>
</dbReference>
<dbReference type="GO" id="GO:0006166">
    <property type="term" value="P:purine ribonucleoside salvage"/>
    <property type="evidence" value="ECO:0007669"/>
    <property type="project" value="UniProtKB-KW"/>
</dbReference>
<dbReference type="CDD" id="cd06223">
    <property type="entry name" value="PRTases_typeI"/>
    <property type="match status" value="1"/>
</dbReference>
<dbReference type="FunFam" id="3.40.50.2020:FF:000021">
    <property type="entry name" value="Adenine phosphoribosyltransferase"/>
    <property type="match status" value="1"/>
</dbReference>
<dbReference type="Gene3D" id="3.40.50.2020">
    <property type="match status" value="1"/>
</dbReference>
<dbReference type="HAMAP" id="MF_00004">
    <property type="entry name" value="Aden_phosphoribosyltr"/>
    <property type="match status" value="1"/>
</dbReference>
<dbReference type="InterPro" id="IPR005764">
    <property type="entry name" value="Ade_phspho_trans"/>
</dbReference>
<dbReference type="InterPro" id="IPR000836">
    <property type="entry name" value="PRibTrfase_dom"/>
</dbReference>
<dbReference type="InterPro" id="IPR029057">
    <property type="entry name" value="PRTase-like"/>
</dbReference>
<dbReference type="InterPro" id="IPR050054">
    <property type="entry name" value="UPRTase/APRTase"/>
</dbReference>
<dbReference type="NCBIfam" id="TIGR01090">
    <property type="entry name" value="apt"/>
    <property type="match status" value="1"/>
</dbReference>
<dbReference type="NCBIfam" id="NF002634">
    <property type="entry name" value="PRK02304.1-3"/>
    <property type="match status" value="1"/>
</dbReference>
<dbReference type="NCBIfam" id="NF002636">
    <property type="entry name" value="PRK02304.1-5"/>
    <property type="match status" value="1"/>
</dbReference>
<dbReference type="PANTHER" id="PTHR32315">
    <property type="entry name" value="ADENINE PHOSPHORIBOSYLTRANSFERASE"/>
    <property type="match status" value="1"/>
</dbReference>
<dbReference type="PANTHER" id="PTHR32315:SF3">
    <property type="entry name" value="ADENINE PHOSPHORIBOSYLTRANSFERASE"/>
    <property type="match status" value="1"/>
</dbReference>
<dbReference type="Pfam" id="PF00156">
    <property type="entry name" value="Pribosyltran"/>
    <property type="match status" value="1"/>
</dbReference>
<dbReference type="SUPFAM" id="SSF53271">
    <property type="entry name" value="PRTase-like"/>
    <property type="match status" value="1"/>
</dbReference>
<dbReference type="PROSITE" id="PS00103">
    <property type="entry name" value="PUR_PYR_PR_TRANSFER"/>
    <property type="match status" value="1"/>
</dbReference>
<gene>
    <name evidence="1" type="primary">apt</name>
    <name type="ordered locus">Hac_1440</name>
</gene>
<feature type="chain" id="PRO_1000000294" description="Adenine phosphoribosyltransferase">
    <location>
        <begin position="1"/>
        <end position="179"/>
    </location>
</feature>
<sequence>MNETLKQELLQNIREVKDYPKKGILFKDITTLLNYPKLFNKLIDALKKRYTPLNVDFIVGIEARGFILGSALAYALGVGFVPVRKKGKLPAHTLSQSYSLEYGNDSIEIHSDAFRGVKGVKVVLIDDLLATGGTALASLELIKALQAECIEACFLIGLKELLGIQLLEEQVKTFCLLEC</sequence>
<proteinExistence type="inferred from homology"/>
<protein>
    <recommendedName>
        <fullName evidence="1">Adenine phosphoribosyltransferase</fullName>
        <shortName evidence="1">APRT</shortName>
        <ecNumber evidence="1">2.4.2.7</ecNumber>
    </recommendedName>
</protein>
<organism>
    <name type="scientific">Helicobacter acinonychis (strain Sheeba)</name>
    <dbReference type="NCBI Taxonomy" id="382638"/>
    <lineage>
        <taxon>Bacteria</taxon>
        <taxon>Pseudomonadati</taxon>
        <taxon>Campylobacterota</taxon>
        <taxon>Epsilonproteobacteria</taxon>
        <taxon>Campylobacterales</taxon>
        <taxon>Helicobacteraceae</taxon>
        <taxon>Helicobacter</taxon>
    </lineage>
</organism>
<name>APT_HELAH</name>
<evidence type="ECO:0000255" key="1">
    <source>
        <dbReference type="HAMAP-Rule" id="MF_00004"/>
    </source>
</evidence>
<comment type="function">
    <text evidence="1">Catalyzes a salvage reaction resulting in the formation of AMP, that is energically less costly than de novo synthesis.</text>
</comment>
<comment type="catalytic activity">
    <reaction evidence="1">
        <text>AMP + diphosphate = 5-phospho-alpha-D-ribose 1-diphosphate + adenine</text>
        <dbReference type="Rhea" id="RHEA:16609"/>
        <dbReference type="ChEBI" id="CHEBI:16708"/>
        <dbReference type="ChEBI" id="CHEBI:33019"/>
        <dbReference type="ChEBI" id="CHEBI:58017"/>
        <dbReference type="ChEBI" id="CHEBI:456215"/>
        <dbReference type="EC" id="2.4.2.7"/>
    </reaction>
</comment>
<comment type="pathway">
    <text evidence="1">Purine metabolism; AMP biosynthesis via salvage pathway; AMP from adenine: step 1/1.</text>
</comment>
<comment type="subunit">
    <text evidence="1">Homodimer.</text>
</comment>
<comment type="subcellular location">
    <subcellularLocation>
        <location evidence="1">Cytoplasm</location>
    </subcellularLocation>
</comment>
<comment type="similarity">
    <text evidence="1">Belongs to the purine/pyrimidine phosphoribosyltransferase family.</text>
</comment>